<proteinExistence type="evidence at protein level"/>
<gene>
    <name type="primary">Tmem14c</name>
</gene>
<keyword id="KW-0903">Direct protein sequencing</keyword>
<keyword id="KW-0350">Heme biosynthesis</keyword>
<keyword id="KW-0472">Membrane</keyword>
<keyword id="KW-0496">Mitochondrion</keyword>
<keyword id="KW-1185">Reference proteome</keyword>
<keyword id="KW-0812">Transmembrane</keyword>
<keyword id="KW-1133">Transmembrane helix</keyword>
<reference key="1">
    <citation type="journal article" date="2005" name="Science">
        <title>The transcriptional landscape of the mammalian genome.</title>
        <authorList>
            <person name="Carninci P."/>
            <person name="Kasukawa T."/>
            <person name="Katayama S."/>
            <person name="Gough J."/>
            <person name="Frith M.C."/>
            <person name="Maeda N."/>
            <person name="Oyama R."/>
            <person name="Ravasi T."/>
            <person name="Lenhard B."/>
            <person name="Wells C."/>
            <person name="Kodzius R."/>
            <person name="Shimokawa K."/>
            <person name="Bajic V.B."/>
            <person name="Brenner S.E."/>
            <person name="Batalov S."/>
            <person name="Forrest A.R."/>
            <person name="Zavolan M."/>
            <person name="Davis M.J."/>
            <person name="Wilming L.G."/>
            <person name="Aidinis V."/>
            <person name="Allen J.E."/>
            <person name="Ambesi-Impiombato A."/>
            <person name="Apweiler R."/>
            <person name="Aturaliya R.N."/>
            <person name="Bailey T.L."/>
            <person name="Bansal M."/>
            <person name="Baxter L."/>
            <person name="Beisel K.W."/>
            <person name="Bersano T."/>
            <person name="Bono H."/>
            <person name="Chalk A.M."/>
            <person name="Chiu K.P."/>
            <person name="Choudhary V."/>
            <person name="Christoffels A."/>
            <person name="Clutterbuck D.R."/>
            <person name="Crowe M.L."/>
            <person name="Dalla E."/>
            <person name="Dalrymple B.P."/>
            <person name="de Bono B."/>
            <person name="Della Gatta G."/>
            <person name="di Bernardo D."/>
            <person name="Down T."/>
            <person name="Engstrom P."/>
            <person name="Fagiolini M."/>
            <person name="Faulkner G."/>
            <person name="Fletcher C.F."/>
            <person name="Fukushima T."/>
            <person name="Furuno M."/>
            <person name="Futaki S."/>
            <person name="Gariboldi M."/>
            <person name="Georgii-Hemming P."/>
            <person name="Gingeras T.R."/>
            <person name="Gojobori T."/>
            <person name="Green R.E."/>
            <person name="Gustincich S."/>
            <person name="Harbers M."/>
            <person name="Hayashi Y."/>
            <person name="Hensch T.K."/>
            <person name="Hirokawa N."/>
            <person name="Hill D."/>
            <person name="Huminiecki L."/>
            <person name="Iacono M."/>
            <person name="Ikeo K."/>
            <person name="Iwama A."/>
            <person name="Ishikawa T."/>
            <person name="Jakt M."/>
            <person name="Kanapin A."/>
            <person name="Katoh M."/>
            <person name="Kawasawa Y."/>
            <person name="Kelso J."/>
            <person name="Kitamura H."/>
            <person name="Kitano H."/>
            <person name="Kollias G."/>
            <person name="Krishnan S.P."/>
            <person name="Kruger A."/>
            <person name="Kummerfeld S.K."/>
            <person name="Kurochkin I.V."/>
            <person name="Lareau L.F."/>
            <person name="Lazarevic D."/>
            <person name="Lipovich L."/>
            <person name="Liu J."/>
            <person name="Liuni S."/>
            <person name="McWilliam S."/>
            <person name="Madan Babu M."/>
            <person name="Madera M."/>
            <person name="Marchionni L."/>
            <person name="Matsuda H."/>
            <person name="Matsuzawa S."/>
            <person name="Miki H."/>
            <person name="Mignone F."/>
            <person name="Miyake S."/>
            <person name="Morris K."/>
            <person name="Mottagui-Tabar S."/>
            <person name="Mulder N."/>
            <person name="Nakano N."/>
            <person name="Nakauchi H."/>
            <person name="Ng P."/>
            <person name="Nilsson R."/>
            <person name="Nishiguchi S."/>
            <person name="Nishikawa S."/>
            <person name="Nori F."/>
            <person name="Ohara O."/>
            <person name="Okazaki Y."/>
            <person name="Orlando V."/>
            <person name="Pang K.C."/>
            <person name="Pavan W.J."/>
            <person name="Pavesi G."/>
            <person name="Pesole G."/>
            <person name="Petrovsky N."/>
            <person name="Piazza S."/>
            <person name="Reed J."/>
            <person name="Reid J.F."/>
            <person name="Ring B.Z."/>
            <person name="Ringwald M."/>
            <person name="Rost B."/>
            <person name="Ruan Y."/>
            <person name="Salzberg S.L."/>
            <person name="Sandelin A."/>
            <person name="Schneider C."/>
            <person name="Schoenbach C."/>
            <person name="Sekiguchi K."/>
            <person name="Semple C.A."/>
            <person name="Seno S."/>
            <person name="Sessa L."/>
            <person name="Sheng Y."/>
            <person name="Shibata Y."/>
            <person name="Shimada H."/>
            <person name="Shimada K."/>
            <person name="Silva D."/>
            <person name="Sinclair B."/>
            <person name="Sperling S."/>
            <person name="Stupka E."/>
            <person name="Sugiura K."/>
            <person name="Sultana R."/>
            <person name="Takenaka Y."/>
            <person name="Taki K."/>
            <person name="Tammoja K."/>
            <person name="Tan S.L."/>
            <person name="Tang S."/>
            <person name="Taylor M.S."/>
            <person name="Tegner J."/>
            <person name="Teichmann S.A."/>
            <person name="Ueda H.R."/>
            <person name="van Nimwegen E."/>
            <person name="Verardo R."/>
            <person name="Wei C.L."/>
            <person name="Yagi K."/>
            <person name="Yamanishi H."/>
            <person name="Zabarovsky E."/>
            <person name="Zhu S."/>
            <person name="Zimmer A."/>
            <person name="Hide W."/>
            <person name="Bult C."/>
            <person name="Grimmond S.M."/>
            <person name="Teasdale R.D."/>
            <person name="Liu E.T."/>
            <person name="Brusic V."/>
            <person name="Quackenbush J."/>
            <person name="Wahlestedt C."/>
            <person name="Mattick J.S."/>
            <person name="Hume D.A."/>
            <person name="Kai C."/>
            <person name="Sasaki D."/>
            <person name="Tomaru Y."/>
            <person name="Fukuda S."/>
            <person name="Kanamori-Katayama M."/>
            <person name="Suzuki M."/>
            <person name="Aoki J."/>
            <person name="Arakawa T."/>
            <person name="Iida J."/>
            <person name="Imamura K."/>
            <person name="Itoh M."/>
            <person name="Kato T."/>
            <person name="Kawaji H."/>
            <person name="Kawagashira N."/>
            <person name="Kawashima T."/>
            <person name="Kojima M."/>
            <person name="Kondo S."/>
            <person name="Konno H."/>
            <person name="Nakano K."/>
            <person name="Ninomiya N."/>
            <person name="Nishio T."/>
            <person name="Okada M."/>
            <person name="Plessy C."/>
            <person name="Shibata K."/>
            <person name="Shiraki T."/>
            <person name="Suzuki S."/>
            <person name="Tagami M."/>
            <person name="Waki K."/>
            <person name="Watahiki A."/>
            <person name="Okamura-Oho Y."/>
            <person name="Suzuki H."/>
            <person name="Kawai J."/>
            <person name="Hayashizaki Y."/>
        </authorList>
    </citation>
    <scope>NUCLEOTIDE SEQUENCE [LARGE SCALE MRNA]</scope>
    <source>
        <strain>C57BL/6J</strain>
        <tissue>Embryo</tissue>
        <tissue>Small intestine</tissue>
        <tissue>Stomach</tissue>
    </source>
</reference>
<reference key="2">
    <citation type="journal article" date="2004" name="Genome Res.">
        <title>The status, quality, and expansion of the NIH full-length cDNA project: the Mammalian Gene Collection (MGC).</title>
        <authorList>
            <consortium name="The MGC Project Team"/>
        </authorList>
    </citation>
    <scope>NUCLEOTIDE SEQUENCE [LARGE SCALE MRNA]</scope>
    <source>
        <strain>C57BL/6J</strain>
        <tissue>Mammary gland</tissue>
    </source>
</reference>
<reference key="3">
    <citation type="submission" date="2007-04" db="UniProtKB">
        <authorList>
            <person name="Lubec G."/>
            <person name="Kang S.U."/>
        </authorList>
    </citation>
    <scope>PROTEIN SEQUENCE OF 62-80; 87-103 AND 104-114</scope>
    <scope>IDENTIFICATION BY MASS SPECTROMETRY</scope>
    <source>
        <strain>C57BL/6J</strain>
        <tissue>Brain</tissue>
    </source>
</reference>
<reference key="4">
    <citation type="journal article" date="2010" name="Cell">
        <title>A tissue-specific atlas of mouse protein phosphorylation and expression.</title>
        <authorList>
            <person name="Huttlin E.L."/>
            <person name="Jedrychowski M.P."/>
            <person name="Elias J.E."/>
            <person name="Goswami T."/>
            <person name="Rad R."/>
            <person name="Beausoleil S.A."/>
            <person name="Villen J."/>
            <person name="Haas W."/>
            <person name="Sowa M.E."/>
            <person name="Gygi S.P."/>
        </authorList>
    </citation>
    <scope>IDENTIFICATION BY MASS SPECTROMETRY [LARGE SCALE ANALYSIS]</scope>
    <source>
        <tissue>Brain</tissue>
        <tissue>Brown adipose tissue</tissue>
        <tissue>Heart</tissue>
        <tissue>Kidney</tissue>
        <tissue>Liver</tissue>
        <tissue>Lung</tissue>
        <tissue>Pancreas</tissue>
        <tissue>Spleen</tissue>
        <tissue>Testis</tissue>
    </source>
</reference>
<comment type="function">
    <text evidence="1">Required for normal heme biosynthesis.</text>
</comment>
<comment type="subcellular location">
    <subcellularLocation>
        <location evidence="1">Mitochondrion membrane</location>
        <topology evidence="1">Multi-pass membrane protein</topology>
    </subcellularLocation>
</comment>
<comment type="similarity">
    <text evidence="3">Belongs to the TMEM14 family.</text>
</comment>
<evidence type="ECO:0000250" key="1"/>
<evidence type="ECO:0000255" key="2"/>
<evidence type="ECO:0000305" key="3"/>
<protein>
    <recommendedName>
        <fullName>Transmembrane protein 14C</fullName>
    </recommendedName>
</protein>
<name>TM14C_MOUSE</name>
<accession>Q9CQN6</accession>
<accession>Q543H6</accession>
<accession>Q9D849</accession>
<sequence>MQKDSGPLMPLHYFGFGYAALVATGGIIGYAKAGSVPSLAAGLFFGGLAGLGAYQLSQDPRNVWVFLATSGTLAGIMGMRFYNSGKFMPAGLIAGASLLMVAKVGISLLSSPHP</sequence>
<organism>
    <name type="scientific">Mus musculus</name>
    <name type="common">Mouse</name>
    <dbReference type="NCBI Taxonomy" id="10090"/>
    <lineage>
        <taxon>Eukaryota</taxon>
        <taxon>Metazoa</taxon>
        <taxon>Chordata</taxon>
        <taxon>Craniata</taxon>
        <taxon>Vertebrata</taxon>
        <taxon>Euteleostomi</taxon>
        <taxon>Mammalia</taxon>
        <taxon>Eutheria</taxon>
        <taxon>Euarchontoglires</taxon>
        <taxon>Glires</taxon>
        <taxon>Rodentia</taxon>
        <taxon>Myomorpha</taxon>
        <taxon>Muroidea</taxon>
        <taxon>Muridae</taxon>
        <taxon>Murinae</taxon>
        <taxon>Mus</taxon>
        <taxon>Mus</taxon>
    </lineage>
</organism>
<dbReference type="EMBL" id="AK003891">
    <property type="protein sequence ID" value="BAB23060.1"/>
    <property type="molecule type" value="mRNA"/>
</dbReference>
<dbReference type="EMBL" id="AK008495">
    <property type="protein sequence ID" value="BAB25700.1"/>
    <property type="molecule type" value="mRNA"/>
</dbReference>
<dbReference type="EMBL" id="AK008878">
    <property type="protein sequence ID" value="BAB25946.1"/>
    <property type="molecule type" value="mRNA"/>
</dbReference>
<dbReference type="EMBL" id="AK010609">
    <property type="protein sequence ID" value="BAB27059.1"/>
    <property type="molecule type" value="mRNA"/>
</dbReference>
<dbReference type="EMBL" id="AK012101">
    <property type="protein sequence ID" value="BAB28032.1"/>
    <property type="molecule type" value="mRNA"/>
</dbReference>
<dbReference type="EMBL" id="AK019395">
    <property type="protein sequence ID" value="BAB31700.1"/>
    <property type="molecule type" value="mRNA"/>
</dbReference>
<dbReference type="EMBL" id="AK050688">
    <property type="protein sequence ID" value="BAC34380.1"/>
    <property type="molecule type" value="mRNA"/>
</dbReference>
<dbReference type="EMBL" id="BC025854">
    <property type="protein sequence ID" value="AAH25854.1"/>
    <property type="molecule type" value="mRNA"/>
</dbReference>
<dbReference type="EMBL" id="BC055862">
    <property type="protein sequence ID" value="AAH55862.1"/>
    <property type="molecule type" value="mRNA"/>
</dbReference>
<dbReference type="CCDS" id="CCDS26470.1"/>
<dbReference type="RefSeq" id="NP_079663.1">
    <property type="nucleotide sequence ID" value="NM_025387.3"/>
</dbReference>
<dbReference type="RefSeq" id="XP_006517001.1">
    <property type="nucleotide sequence ID" value="XM_006516938.3"/>
</dbReference>
<dbReference type="RefSeq" id="XP_006517002.1">
    <property type="nucleotide sequence ID" value="XM_006516939.2"/>
</dbReference>
<dbReference type="BioGRID" id="211255">
    <property type="interactions" value="2"/>
</dbReference>
<dbReference type="FunCoup" id="Q9CQN6">
    <property type="interactions" value="1985"/>
</dbReference>
<dbReference type="IntAct" id="Q9CQN6">
    <property type="interactions" value="1"/>
</dbReference>
<dbReference type="STRING" id="10090.ENSMUSP00000021790"/>
<dbReference type="iPTMnet" id="Q9CQN6"/>
<dbReference type="PhosphoSitePlus" id="Q9CQN6"/>
<dbReference type="SwissPalm" id="Q9CQN6"/>
<dbReference type="jPOST" id="Q9CQN6"/>
<dbReference type="PaxDb" id="10090-ENSMUSP00000021790"/>
<dbReference type="PeptideAtlas" id="Q9CQN6"/>
<dbReference type="ProteomicsDB" id="259462"/>
<dbReference type="Pumba" id="Q9CQN6"/>
<dbReference type="TopDownProteomics" id="Q9CQN6"/>
<dbReference type="DNASU" id="66154"/>
<dbReference type="Ensembl" id="ENSMUST00000021790.7">
    <property type="protein sequence ID" value="ENSMUSP00000021790.6"/>
    <property type="gene ID" value="ENSMUSG00000021361.8"/>
</dbReference>
<dbReference type="GeneID" id="66154"/>
<dbReference type="KEGG" id="mmu:66154"/>
<dbReference type="UCSC" id="uc007qet.2">
    <property type="organism name" value="mouse"/>
</dbReference>
<dbReference type="AGR" id="MGI:1913404"/>
<dbReference type="CTD" id="51522"/>
<dbReference type="MGI" id="MGI:1913404">
    <property type="gene designation" value="Tmem14c"/>
</dbReference>
<dbReference type="VEuPathDB" id="HostDB:ENSMUSG00000021361"/>
<dbReference type="eggNOG" id="KOG4267">
    <property type="taxonomic scope" value="Eukaryota"/>
</dbReference>
<dbReference type="GeneTree" id="ENSGT00940000154772"/>
<dbReference type="HOGENOM" id="CLU_096652_4_0_1"/>
<dbReference type="InParanoid" id="Q9CQN6"/>
<dbReference type="OMA" id="ANSHKIM"/>
<dbReference type="OrthoDB" id="5620at2759"/>
<dbReference type="PhylomeDB" id="Q9CQN6"/>
<dbReference type="TreeFam" id="TF323345"/>
<dbReference type="BioGRID-ORCS" id="66154">
    <property type="hits" value="3 hits in 75 CRISPR screens"/>
</dbReference>
<dbReference type="ChiTaRS" id="Tmem14c">
    <property type="organism name" value="mouse"/>
</dbReference>
<dbReference type="PRO" id="PR:Q9CQN6"/>
<dbReference type="Proteomes" id="UP000000589">
    <property type="component" value="Chromosome 13"/>
</dbReference>
<dbReference type="RNAct" id="Q9CQN6">
    <property type="molecule type" value="protein"/>
</dbReference>
<dbReference type="Bgee" id="ENSMUSG00000021361">
    <property type="expression patterns" value="Expressed in fetal liver hematopoietic progenitor cell and 332 other cell types or tissues"/>
</dbReference>
<dbReference type="GO" id="GO:0005743">
    <property type="term" value="C:mitochondrial inner membrane"/>
    <property type="evidence" value="ECO:0000314"/>
    <property type="project" value="MGI"/>
</dbReference>
<dbReference type="GO" id="GO:0005739">
    <property type="term" value="C:mitochondrion"/>
    <property type="evidence" value="ECO:0000314"/>
    <property type="project" value="UniProtKB"/>
</dbReference>
<dbReference type="GO" id="GO:0022857">
    <property type="term" value="F:transmembrane transporter activity"/>
    <property type="evidence" value="ECO:0000315"/>
    <property type="project" value="FlyBase"/>
</dbReference>
<dbReference type="GO" id="GO:0030218">
    <property type="term" value="P:erythrocyte differentiation"/>
    <property type="evidence" value="ECO:0000315"/>
    <property type="project" value="MGI"/>
</dbReference>
<dbReference type="GO" id="GO:0006783">
    <property type="term" value="P:heme biosynthetic process"/>
    <property type="evidence" value="ECO:0007669"/>
    <property type="project" value="UniProtKB-KW"/>
</dbReference>
<dbReference type="GO" id="GO:0006839">
    <property type="term" value="P:mitochondrial transport"/>
    <property type="evidence" value="ECO:0000315"/>
    <property type="project" value="MGI"/>
</dbReference>
<dbReference type="GO" id="GO:0070453">
    <property type="term" value="P:regulation of heme biosynthetic process"/>
    <property type="evidence" value="ECO:0000315"/>
    <property type="project" value="MGI"/>
</dbReference>
<dbReference type="FunFam" id="1.10.10.1740:FF:000002">
    <property type="entry name" value="Transmembrane protein 14C"/>
    <property type="match status" value="1"/>
</dbReference>
<dbReference type="Gene3D" id="1.10.10.1740">
    <property type="entry name" value="Transmembrane protein 14-like"/>
    <property type="match status" value="1"/>
</dbReference>
<dbReference type="InterPro" id="IPR005349">
    <property type="entry name" value="TMEM14"/>
</dbReference>
<dbReference type="InterPro" id="IPR044890">
    <property type="entry name" value="TMEM14_sf"/>
</dbReference>
<dbReference type="PANTHER" id="PTHR12668">
    <property type="entry name" value="TRANSMEMBRANE PROTEIN 14, 15"/>
    <property type="match status" value="1"/>
</dbReference>
<dbReference type="PANTHER" id="PTHR12668:SF4">
    <property type="entry name" value="TRANSMEMBRANE PROTEIN 14C-RELATED"/>
    <property type="match status" value="1"/>
</dbReference>
<dbReference type="Pfam" id="PF03647">
    <property type="entry name" value="Tmemb_14"/>
    <property type="match status" value="1"/>
</dbReference>
<feature type="chain" id="PRO_0000221174" description="Transmembrane protein 14C">
    <location>
        <begin position="1"/>
        <end position="114"/>
    </location>
</feature>
<feature type="transmembrane region" description="Helical" evidence="2">
    <location>
        <begin position="8"/>
        <end position="28"/>
    </location>
</feature>
<feature type="transmembrane region" description="Helical" evidence="2">
    <location>
        <begin position="33"/>
        <end position="53"/>
    </location>
</feature>
<feature type="transmembrane region" description="Helical" evidence="2">
    <location>
        <begin position="63"/>
        <end position="83"/>
    </location>
</feature>
<feature type="transmembrane region" description="Helical" evidence="2">
    <location>
        <begin position="89"/>
        <end position="109"/>
    </location>
</feature>